<reference key="1">
    <citation type="journal article" date="2021" name="J. Biosci. Bioeng.">
        <title>Identification and characterization of a chc gene cluster responsible for the aromatization pathway of cyclohexanecarboxylate degradation in Sinomonas cyclohexanicum ATCC 51369.</title>
        <authorList>
            <person name="Yamamoto T."/>
            <person name="Hasegawa Y."/>
            <person name="Lau P.C.K."/>
            <person name="Iwaki H."/>
        </authorList>
    </citation>
    <scope>NUCLEOTIDE SEQUENCE [LARGE SCALE GENOMIC DNA]</scope>
    <scope>FUNCTION</scope>
    <scope>SUBUNIT</scope>
    <scope>INDUCTION</scope>
    <source>
        <strain>ATCC 51369 / MU</strain>
    </source>
</reference>
<reference key="2">
    <citation type="journal article" date="1993" name="Eur. J. Biochem.">
        <title>Aromatization of 4-oxocyclohexanecarboxylic acid to 4-hydroxybenzoic acid by two distinctive desaturases from Corynebacterium cyclohexanicum. Properties of two desaturases.</title>
        <authorList>
            <person name="Kaneda T."/>
            <person name="Obata H."/>
            <person name="Tokumoto M."/>
        </authorList>
    </citation>
    <scope>FUNCTION</scope>
    <scope>SUBUNIT</scope>
    <source>
        <strain>ATCC 51369 / MU</strain>
    </source>
</reference>
<evidence type="ECO:0000250" key="1">
    <source>
        <dbReference type="UniProtKB" id="P0DXE2"/>
    </source>
</evidence>
<evidence type="ECO:0000269" key="2">
    <source>
    </source>
</evidence>
<evidence type="ECO:0000269" key="3">
    <source>
    </source>
</evidence>
<evidence type="ECO:0000303" key="4">
    <source>
    </source>
</evidence>
<evidence type="ECO:0000303" key="5">
    <source>
    </source>
</evidence>
<evidence type="ECO:0000305" key="6"/>
<evidence type="ECO:0000305" key="7">
    <source>
    </source>
</evidence>
<evidence type="ECO:0000305" key="8">
    <source>
    </source>
</evidence>
<evidence type="ECO:0000312" key="9">
    <source>
        <dbReference type="EMBL" id="BCT75149.1"/>
    </source>
</evidence>
<dbReference type="EC" id="1.17.3.-" evidence="7 8"/>
<dbReference type="EMBL" id="AP024525">
    <property type="protein sequence ID" value="BCT75149.1"/>
    <property type="molecule type" value="Genomic_DNA"/>
</dbReference>
<dbReference type="RefSeq" id="WP_229231919.1">
    <property type="nucleotide sequence ID" value="NZ_AP024525.1"/>
</dbReference>
<dbReference type="SMR" id="P0DXE3"/>
<dbReference type="KEGG" id="ccyc:SCMU_09910"/>
<dbReference type="GO" id="GO:0033765">
    <property type="term" value="F:steroid dehydrogenase activity, acting on the CH-CH group of donors"/>
    <property type="evidence" value="ECO:0007669"/>
    <property type="project" value="UniProtKB-ARBA"/>
</dbReference>
<dbReference type="GO" id="GO:0008202">
    <property type="term" value="P:steroid metabolic process"/>
    <property type="evidence" value="ECO:0007669"/>
    <property type="project" value="UniProtKB-ARBA"/>
</dbReference>
<dbReference type="Gene3D" id="3.50.50.60">
    <property type="entry name" value="FAD/NAD(P)-binding domain"/>
    <property type="match status" value="2"/>
</dbReference>
<dbReference type="Gene3D" id="3.90.700.10">
    <property type="entry name" value="Succinate dehydrogenase/fumarate reductase flavoprotein, catalytic domain"/>
    <property type="match status" value="1"/>
</dbReference>
<dbReference type="InterPro" id="IPR003953">
    <property type="entry name" value="FAD-dep_OxRdtase_2_FAD-bd"/>
</dbReference>
<dbReference type="InterPro" id="IPR050315">
    <property type="entry name" value="FAD-oxidoreductase_2"/>
</dbReference>
<dbReference type="InterPro" id="IPR036188">
    <property type="entry name" value="FAD/NAD-bd_sf"/>
</dbReference>
<dbReference type="InterPro" id="IPR027477">
    <property type="entry name" value="Succ_DH/fumarate_Rdtase_cat_sf"/>
</dbReference>
<dbReference type="PANTHER" id="PTHR43400:SF10">
    <property type="entry name" value="3-OXOSTEROID 1-DEHYDROGENASE"/>
    <property type="match status" value="1"/>
</dbReference>
<dbReference type="PANTHER" id="PTHR43400">
    <property type="entry name" value="FUMARATE REDUCTASE"/>
    <property type="match status" value="1"/>
</dbReference>
<dbReference type="Pfam" id="PF00890">
    <property type="entry name" value="FAD_binding_2"/>
    <property type="match status" value="1"/>
</dbReference>
<dbReference type="PRINTS" id="PR00420">
    <property type="entry name" value="RNGMNOXGNASE"/>
</dbReference>
<dbReference type="SUPFAM" id="SSF51905">
    <property type="entry name" value="FAD/NAD(P)-binding domain"/>
    <property type="match status" value="1"/>
</dbReference>
<dbReference type="SUPFAM" id="SSF56425">
    <property type="entry name" value="Succinate dehydrogenase/fumarate reductase flavoprotein, catalytic domain"/>
    <property type="match status" value="1"/>
</dbReference>
<organism>
    <name type="scientific">Sinomonas cyclohexanicum</name>
    <name type="common">Corynebacterium cyclohexanicum</name>
    <dbReference type="NCBI Taxonomy" id="322009"/>
    <lineage>
        <taxon>Bacteria</taxon>
        <taxon>Bacillati</taxon>
        <taxon>Actinomycetota</taxon>
        <taxon>Actinomycetes</taxon>
        <taxon>Micrococcales</taxon>
        <taxon>Micrococcaceae</taxon>
        <taxon>Sinomonas</taxon>
    </lineage>
</organism>
<sequence>MEHTVKQNKTIACDVLVVGSGAAGMAAALKAASQGLSVIVAEKEQYFGGTTAISAGWAWVPGNRVGTAAGDTREEVETYLKNLAPDTYNADGVAQFLDTVPEALDFFERETDVEFVYPEKAPDYQMDLPGARLGGRAILPKDTDARILGDKRLLMQPYMSSYTVFGYMPQVGPDINEFFHVNQSVKSFVYVAKKLLRTWFDAARYRRPVLRSNGNALMTLMVKSAYDAGVRMWKSSPVLELTRGDDGAVTGAVTGGEHPARVEAKLGVILAAGGFSGNTELRKKYFPHDAAGDDHFTPTVGHGGDAATMTLAAGGRIDDAVSSVGSWAPVTVFRFRDGRQRLFPHLRAIGLPGLIAVDRHGKRFGNEALSYHDFGGRMIAHNAGEDKTFGWVIADEKTMHKYGIGYAKPWPMPRGYFYKMGYLVKGNTLEELADRIGVDAAGLTQTVAEFNVGARAGEDPAFGRGSTEYNHFRGDMEHKPNPNLAPLDKGPYYAAKIQMGDLGTFAGIAVDSDNLVVTEEGTPIPGLLAVGAAARSVFGGGYPGYGSHIGAALVFGYRAGRDVARLASARENGRGIGRPASASVAEEAAR</sequence>
<name>CHCC2_SINCY</name>
<accession>P0DXE3</accession>
<comment type="function">
    <text evidence="2 3">Desaturase involved in a cyclohexanecarboxylate (CHCA) degradation pathway (PubMed:34583900, PubMed:8281951). Probably catalyzes the conversion of 4-oxocyclohexenecarboxylate to 4-oxocyclohex-2,5-dienecarboxylate, which is spontaneously isomerized to 4-hydroxybenzoate (4-HBA) (PubMed:34583900, PubMed:8281951).</text>
</comment>
<comment type="catalytic activity">
    <reaction evidence="7 8">
        <text>4-oxocyclohex-2-ene-1-carboxylate + NAD(+) = 4-oxocyclohexa-2,5-diene-1-carboxylate + NADH + H(+)</text>
        <dbReference type="Rhea" id="RHEA:79159"/>
        <dbReference type="ChEBI" id="CHEBI:15378"/>
        <dbReference type="ChEBI" id="CHEBI:57540"/>
        <dbReference type="ChEBI" id="CHEBI:57945"/>
        <dbReference type="ChEBI" id="CHEBI:229702"/>
        <dbReference type="ChEBI" id="CHEBI:229703"/>
    </reaction>
    <physiologicalReaction direction="left-to-right" evidence="7 8">
        <dbReference type="Rhea" id="RHEA:79160"/>
    </physiologicalReaction>
</comment>
<comment type="cofactor">
    <cofactor evidence="1">
        <name>FAD</name>
        <dbReference type="ChEBI" id="CHEBI:57692"/>
    </cofactor>
</comment>
<comment type="subunit">
    <text evidence="2">Forms multimers.</text>
</comment>
<comment type="induction">
    <text evidence="2">Induced by CHCA, trans-4-hydroxyCHCA and 4-oxoCHCA but not by 4-hydroxybenzoate (4-HBA).</text>
</comment>
<comment type="similarity">
    <text evidence="6">Belongs to the FAD-dependent oxidoreductase 2 family.</text>
</comment>
<proteinExistence type="evidence at protein level"/>
<gene>
    <name evidence="4" type="primary">chcC2</name>
    <name evidence="9" type="ORF">SCMU_09910</name>
</gene>
<feature type="chain" id="PRO_0000460811" description="4-oxocyclohex-2-ene-1-carboxylate 5-dehydrogenase">
    <location>
        <begin position="1"/>
        <end position="590"/>
    </location>
</feature>
<protein>
    <recommendedName>
        <fullName evidence="6">4-oxocyclohex-2-ene-1-carboxylate 5-dehydrogenase</fullName>
        <ecNumber evidence="7 8">1.17.3.-</ecNumber>
    </recommendedName>
    <alternativeName>
        <fullName evidence="5">4-oxocycIohex-2-enecarboxylic acid 5-desaturase</fullName>
    </alternativeName>
    <alternativeName>
        <fullName evidence="4">4-oxocyclohexenecarboxylate desaturase</fullName>
    </alternativeName>
    <alternativeName>
        <fullName evidence="5">Desaturase II</fullName>
    </alternativeName>
</protein>
<keyword id="KW-0274">FAD</keyword>
<keyword id="KW-0285">Flavoprotein</keyword>
<keyword id="KW-0560">Oxidoreductase</keyword>